<keyword id="KW-0963">Cytoplasm</keyword>
<keyword id="KW-0238">DNA-binding</keyword>
<keyword id="KW-1185">Reference proteome</keyword>
<gene>
    <name type="ordered locus">GDI3467</name>
    <name type="ordered locus">Gdia_2910</name>
</gene>
<organism>
    <name type="scientific">Gluconacetobacter diazotrophicus (strain ATCC 49037 / DSM 5601 / CCUG 37298 / CIP 103539 / LMG 7603 / PAl5)</name>
    <dbReference type="NCBI Taxonomy" id="272568"/>
    <lineage>
        <taxon>Bacteria</taxon>
        <taxon>Pseudomonadati</taxon>
        <taxon>Pseudomonadota</taxon>
        <taxon>Alphaproteobacteria</taxon>
        <taxon>Acetobacterales</taxon>
        <taxon>Acetobacteraceae</taxon>
        <taxon>Gluconacetobacter</taxon>
    </lineage>
</organism>
<accession>A9H481</accession>
<accession>B5ZIA8</accession>
<evidence type="ECO:0000255" key="1">
    <source>
        <dbReference type="HAMAP-Rule" id="MF_00274"/>
    </source>
</evidence>
<proteinExistence type="inferred from homology"/>
<reference key="1">
    <citation type="journal article" date="2009" name="BMC Genomics">
        <title>Complete genome sequence of the sugarcane nitrogen-fixing endophyte Gluconacetobacter diazotrophicus Pal5.</title>
        <authorList>
            <person name="Bertalan M."/>
            <person name="Albano R."/>
            <person name="de Padua V."/>
            <person name="Rouws L."/>
            <person name="Rojas C."/>
            <person name="Hemerly A."/>
            <person name="Teixeira K."/>
            <person name="Schwab S."/>
            <person name="Araujo J."/>
            <person name="Oliveira A."/>
            <person name="Franca L."/>
            <person name="Magalhaes V."/>
            <person name="Alqueres S."/>
            <person name="Cardoso A."/>
            <person name="Almeida W."/>
            <person name="Loureiro M.M."/>
            <person name="Nogueira E."/>
            <person name="Cidade D."/>
            <person name="Oliveira D."/>
            <person name="Simao T."/>
            <person name="Macedo J."/>
            <person name="Valadao A."/>
            <person name="Dreschsel M."/>
            <person name="Freitas F."/>
            <person name="Vidal M."/>
            <person name="Guedes H."/>
            <person name="Rodrigues E."/>
            <person name="Meneses C."/>
            <person name="Brioso P."/>
            <person name="Pozzer L."/>
            <person name="Figueiredo D."/>
            <person name="Montano H."/>
            <person name="Junior J."/>
            <person name="de Souza Filho G."/>
            <person name="Martin Quintana Flores V."/>
            <person name="Ferreira B."/>
            <person name="Branco A."/>
            <person name="Gonzalez P."/>
            <person name="Guillobel H."/>
            <person name="Lemos M."/>
            <person name="Seibel L."/>
            <person name="Macedo J."/>
            <person name="Alves-Ferreira M."/>
            <person name="Sachetto-Martins G."/>
            <person name="Coelho A."/>
            <person name="Santos E."/>
            <person name="Amaral G."/>
            <person name="Neves A."/>
            <person name="Pacheco A.B."/>
            <person name="Carvalho D."/>
            <person name="Lery L."/>
            <person name="Bisch P."/>
            <person name="Rossle S.C."/>
            <person name="Urmenyi T."/>
            <person name="Rael Pereira A."/>
            <person name="Silva R."/>
            <person name="Rondinelli E."/>
            <person name="von Kruger W."/>
            <person name="Martins O."/>
            <person name="Baldani J.I."/>
            <person name="Ferreira P.C."/>
        </authorList>
    </citation>
    <scope>NUCLEOTIDE SEQUENCE [LARGE SCALE GENOMIC DNA]</scope>
    <source>
        <strain>ATCC 49037 / DSM 5601 / CCUG 37298 / CIP 103539 / LMG 7603 / PAl5</strain>
    </source>
</reference>
<reference key="2">
    <citation type="journal article" date="2010" name="Stand. Genomic Sci.">
        <title>Two genome sequences of the same bacterial strain, Gluconacetobacter diazotrophicus PAl 5, suggest a new standard in genome sequence submission.</title>
        <authorList>
            <person name="Giongo A."/>
            <person name="Tyler H.L."/>
            <person name="Zipperer U.N."/>
            <person name="Triplett E.W."/>
        </authorList>
    </citation>
    <scope>NUCLEOTIDE SEQUENCE [LARGE SCALE GENOMIC DNA]</scope>
    <source>
        <strain>ATCC 49037 / DSM 5601 / CCUG 37298 / CIP 103539 / LMG 7603 / PAl5</strain>
    </source>
</reference>
<feature type="chain" id="PRO_1000078759" description="Nucleoid-associated protein GDI3467/Gdia_2910">
    <location>
        <begin position="1"/>
        <end position="107"/>
    </location>
</feature>
<dbReference type="EMBL" id="AM889285">
    <property type="protein sequence ID" value="CAP57410.1"/>
    <property type="molecule type" value="Genomic_DNA"/>
</dbReference>
<dbReference type="EMBL" id="CP001189">
    <property type="protein sequence ID" value="ACI52641.1"/>
    <property type="molecule type" value="Genomic_DNA"/>
</dbReference>
<dbReference type="RefSeq" id="WP_012228088.1">
    <property type="nucleotide sequence ID" value="NC_010125.1"/>
</dbReference>
<dbReference type="SMR" id="A9H481"/>
<dbReference type="STRING" id="272568.GDI3467"/>
<dbReference type="KEGG" id="gdi:GDI3467"/>
<dbReference type="KEGG" id="gdj:Gdia_2910"/>
<dbReference type="eggNOG" id="COG0718">
    <property type="taxonomic scope" value="Bacteria"/>
</dbReference>
<dbReference type="HOGENOM" id="CLU_140930_0_1_5"/>
<dbReference type="OrthoDB" id="9803080at2"/>
<dbReference type="Proteomes" id="UP000001176">
    <property type="component" value="Chromosome"/>
</dbReference>
<dbReference type="GO" id="GO:0043590">
    <property type="term" value="C:bacterial nucleoid"/>
    <property type="evidence" value="ECO:0007669"/>
    <property type="project" value="UniProtKB-UniRule"/>
</dbReference>
<dbReference type="GO" id="GO:0005829">
    <property type="term" value="C:cytosol"/>
    <property type="evidence" value="ECO:0007669"/>
    <property type="project" value="TreeGrafter"/>
</dbReference>
<dbReference type="GO" id="GO:0003677">
    <property type="term" value="F:DNA binding"/>
    <property type="evidence" value="ECO:0007669"/>
    <property type="project" value="UniProtKB-UniRule"/>
</dbReference>
<dbReference type="Gene3D" id="3.30.1310.10">
    <property type="entry name" value="Nucleoid-associated protein YbaB-like domain"/>
    <property type="match status" value="1"/>
</dbReference>
<dbReference type="HAMAP" id="MF_00274">
    <property type="entry name" value="DNA_YbaB_EbfC"/>
    <property type="match status" value="1"/>
</dbReference>
<dbReference type="InterPro" id="IPR036894">
    <property type="entry name" value="YbaB-like_sf"/>
</dbReference>
<dbReference type="InterPro" id="IPR004401">
    <property type="entry name" value="YbaB/EbfC"/>
</dbReference>
<dbReference type="NCBIfam" id="TIGR00103">
    <property type="entry name" value="DNA_YbaB_EbfC"/>
    <property type="match status" value="1"/>
</dbReference>
<dbReference type="PANTHER" id="PTHR33449">
    <property type="entry name" value="NUCLEOID-ASSOCIATED PROTEIN YBAB"/>
    <property type="match status" value="1"/>
</dbReference>
<dbReference type="PANTHER" id="PTHR33449:SF1">
    <property type="entry name" value="NUCLEOID-ASSOCIATED PROTEIN YBAB"/>
    <property type="match status" value="1"/>
</dbReference>
<dbReference type="Pfam" id="PF02575">
    <property type="entry name" value="YbaB_DNA_bd"/>
    <property type="match status" value="1"/>
</dbReference>
<dbReference type="PIRSF" id="PIRSF004555">
    <property type="entry name" value="UCP004555"/>
    <property type="match status" value="1"/>
</dbReference>
<dbReference type="SUPFAM" id="SSF82607">
    <property type="entry name" value="YbaB-like"/>
    <property type="match status" value="1"/>
</dbReference>
<name>Y3467_GLUDA</name>
<sequence length="107" mass="11541">MKNLAGLMKQATQMQARMEEMQSKLEGMTIEGSAGAGMVHVTLNGKGDMKAVKIDPKLADPAEMEMLQDLIVAACADARKLLDERASEEMKKVTGGMNLPAGLKFPF</sequence>
<protein>
    <recommendedName>
        <fullName evidence="1">Nucleoid-associated protein GDI3467/Gdia_2910</fullName>
    </recommendedName>
</protein>
<comment type="function">
    <text evidence="1">Binds to DNA and alters its conformation. May be involved in regulation of gene expression, nucleoid organization and DNA protection.</text>
</comment>
<comment type="subunit">
    <text evidence="1">Homodimer.</text>
</comment>
<comment type="subcellular location">
    <subcellularLocation>
        <location evidence="1">Cytoplasm</location>
        <location evidence="1">Nucleoid</location>
    </subcellularLocation>
</comment>
<comment type="similarity">
    <text evidence="1">Belongs to the YbaB/EbfC family.</text>
</comment>